<feature type="chain" id="PRO_0000092168" description="Cytochrome c biogenesis ATP-binding export protein CcmA">
    <location>
        <begin position="1"/>
        <end position="214"/>
    </location>
</feature>
<feature type="domain" description="ABC transporter" evidence="1">
    <location>
        <begin position="8"/>
        <end position="212"/>
    </location>
</feature>
<feature type="binding site" evidence="1">
    <location>
        <begin position="40"/>
        <end position="47"/>
    </location>
    <ligand>
        <name>ATP</name>
        <dbReference type="ChEBI" id="CHEBI:30616"/>
    </ligand>
</feature>
<proteinExistence type="inferred from homology"/>
<sequence>MVKSTPMLYAADLACLKGDRLLFRGLSLHVAPGAMLRIAGPNGFGKTSLLRILCGLAHPEAGEIRWNGRPIAGDRESFHRTLLYLGHAPALNDLLTPLENLRFACAAAGDDVDEDACVDALVRIGLADQLDLPARVLSQGQRRRVGLARLFLGIRRSLWVLDEPFTALDAAAVADLATTLSDHCAAGGVVILTTHQDAPFAVPPTVLDLSEVAA</sequence>
<comment type="function">
    <text evidence="1">Part of the ABC transporter complex CcmAB involved in the biogenesis of c-type cytochromes; once thought to export heme, this seems not to be the case, but its exact role is uncertain. Responsible for energy coupling to the transport system.</text>
</comment>
<comment type="catalytic activity">
    <reaction evidence="1">
        <text>heme b(in) + ATP + H2O = heme b(out) + ADP + phosphate + H(+)</text>
        <dbReference type="Rhea" id="RHEA:19261"/>
        <dbReference type="ChEBI" id="CHEBI:15377"/>
        <dbReference type="ChEBI" id="CHEBI:15378"/>
        <dbReference type="ChEBI" id="CHEBI:30616"/>
        <dbReference type="ChEBI" id="CHEBI:43474"/>
        <dbReference type="ChEBI" id="CHEBI:60344"/>
        <dbReference type="ChEBI" id="CHEBI:456216"/>
        <dbReference type="EC" id="7.6.2.5"/>
    </reaction>
</comment>
<comment type="subunit">
    <text evidence="1">The complex is composed of two ATP-binding proteins (CcmA) and two transmembrane proteins (CcmB).</text>
</comment>
<comment type="subcellular location">
    <subcellularLocation>
        <location evidence="1">Cell inner membrane</location>
        <topology evidence="1">Peripheral membrane protein</topology>
    </subcellularLocation>
</comment>
<comment type="similarity">
    <text evidence="1">Belongs to the ABC transporter superfamily. CcmA exporter (TC 3.A.1.107) family.</text>
</comment>
<reference key="1">
    <citation type="journal article" date="2005" name="Arch. Microbiol.">
        <title>The genome sequence of an anaerobic aromatic-degrading denitrifying bacterium, strain EbN1.</title>
        <authorList>
            <person name="Rabus R."/>
            <person name="Kube M."/>
            <person name="Heider J."/>
            <person name="Beck A."/>
            <person name="Heitmann K."/>
            <person name="Widdel F."/>
            <person name="Reinhardt R."/>
        </authorList>
    </citation>
    <scope>NUCLEOTIDE SEQUENCE [LARGE SCALE GENOMIC DNA]</scope>
    <source>
        <strain>DSM 19018 / LMG 30748 / EbN1</strain>
    </source>
</reference>
<gene>
    <name evidence="1" type="primary">ccmA</name>
    <name type="ordered locus">AZOSEA19790</name>
    <name type="ORF">ebA3514</name>
</gene>
<dbReference type="EC" id="7.6.2.5" evidence="1"/>
<dbReference type="EMBL" id="CR555306">
    <property type="protein sequence ID" value="CAI08104.1"/>
    <property type="molecule type" value="Genomic_DNA"/>
</dbReference>
<dbReference type="SMR" id="Q5P3L0"/>
<dbReference type="STRING" id="76114.ebA3514"/>
<dbReference type="KEGG" id="eba:ebA3514"/>
<dbReference type="eggNOG" id="COG4133">
    <property type="taxonomic scope" value="Bacteria"/>
</dbReference>
<dbReference type="HOGENOM" id="CLU_000604_1_2_4"/>
<dbReference type="Proteomes" id="UP000006552">
    <property type="component" value="Chromosome"/>
</dbReference>
<dbReference type="GO" id="GO:0005886">
    <property type="term" value="C:plasma membrane"/>
    <property type="evidence" value="ECO:0007669"/>
    <property type="project" value="UniProtKB-SubCell"/>
</dbReference>
<dbReference type="GO" id="GO:0015439">
    <property type="term" value="F:ABC-type heme transporter activity"/>
    <property type="evidence" value="ECO:0007669"/>
    <property type="project" value="UniProtKB-EC"/>
</dbReference>
<dbReference type="GO" id="GO:0005524">
    <property type="term" value="F:ATP binding"/>
    <property type="evidence" value="ECO:0007669"/>
    <property type="project" value="UniProtKB-KW"/>
</dbReference>
<dbReference type="GO" id="GO:0016887">
    <property type="term" value="F:ATP hydrolysis activity"/>
    <property type="evidence" value="ECO:0007669"/>
    <property type="project" value="InterPro"/>
</dbReference>
<dbReference type="GO" id="GO:0017004">
    <property type="term" value="P:cytochrome complex assembly"/>
    <property type="evidence" value="ECO:0007669"/>
    <property type="project" value="UniProtKB-KW"/>
</dbReference>
<dbReference type="Gene3D" id="3.40.50.300">
    <property type="entry name" value="P-loop containing nucleotide triphosphate hydrolases"/>
    <property type="match status" value="1"/>
</dbReference>
<dbReference type="InterPro" id="IPR003593">
    <property type="entry name" value="AAA+_ATPase"/>
</dbReference>
<dbReference type="InterPro" id="IPR003439">
    <property type="entry name" value="ABC_transporter-like_ATP-bd"/>
</dbReference>
<dbReference type="InterPro" id="IPR017871">
    <property type="entry name" value="ABC_transporter-like_CS"/>
</dbReference>
<dbReference type="InterPro" id="IPR005895">
    <property type="entry name" value="ABC_transptr_haem_export_CcmA"/>
</dbReference>
<dbReference type="InterPro" id="IPR027417">
    <property type="entry name" value="P-loop_NTPase"/>
</dbReference>
<dbReference type="NCBIfam" id="TIGR01189">
    <property type="entry name" value="ccmA"/>
    <property type="match status" value="1"/>
</dbReference>
<dbReference type="NCBIfam" id="NF010061">
    <property type="entry name" value="PRK13538.1"/>
    <property type="match status" value="1"/>
</dbReference>
<dbReference type="PANTHER" id="PTHR43499">
    <property type="entry name" value="ABC TRANSPORTER I FAMILY MEMBER 1"/>
    <property type="match status" value="1"/>
</dbReference>
<dbReference type="PANTHER" id="PTHR43499:SF1">
    <property type="entry name" value="ABC TRANSPORTER I FAMILY MEMBER 1"/>
    <property type="match status" value="1"/>
</dbReference>
<dbReference type="Pfam" id="PF00005">
    <property type="entry name" value="ABC_tran"/>
    <property type="match status" value="1"/>
</dbReference>
<dbReference type="SMART" id="SM00382">
    <property type="entry name" value="AAA"/>
    <property type="match status" value="1"/>
</dbReference>
<dbReference type="SUPFAM" id="SSF52540">
    <property type="entry name" value="P-loop containing nucleoside triphosphate hydrolases"/>
    <property type="match status" value="1"/>
</dbReference>
<dbReference type="PROSITE" id="PS00211">
    <property type="entry name" value="ABC_TRANSPORTER_1"/>
    <property type="match status" value="1"/>
</dbReference>
<dbReference type="PROSITE" id="PS50893">
    <property type="entry name" value="ABC_TRANSPORTER_2"/>
    <property type="match status" value="1"/>
</dbReference>
<dbReference type="PROSITE" id="PS51243">
    <property type="entry name" value="CCMA"/>
    <property type="match status" value="1"/>
</dbReference>
<accession>Q5P3L0</accession>
<name>CCMA_AROAE</name>
<protein>
    <recommendedName>
        <fullName evidence="1">Cytochrome c biogenesis ATP-binding export protein CcmA</fullName>
        <ecNumber evidence="1">7.6.2.5</ecNumber>
    </recommendedName>
    <alternativeName>
        <fullName evidence="1">Heme exporter protein A</fullName>
    </alternativeName>
</protein>
<keyword id="KW-0067">ATP-binding</keyword>
<keyword id="KW-0997">Cell inner membrane</keyword>
<keyword id="KW-1003">Cell membrane</keyword>
<keyword id="KW-0201">Cytochrome c-type biogenesis</keyword>
<keyword id="KW-0472">Membrane</keyword>
<keyword id="KW-0547">Nucleotide-binding</keyword>
<keyword id="KW-1185">Reference proteome</keyword>
<keyword id="KW-1278">Translocase</keyword>
<keyword id="KW-0813">Transport</keyword>
<evidence type="ECO:0000255" key="1">
    <source>
        <dbReference type="HAMAP-Rule" id="MF_01707"/>
    </source>
</evidence>
<organism>
    <name type="scientific">Aromatoleum aromaticum (strain DSM 19018 / LMG 30748 / EbN1)</name>
    <name type="common">Azoarcus sp. (strain EbN1)</name>
    <dbReference type="NCBI Taxonomy" id="76114"/>
    <lineage>
        <taxon>Bacteria</taxon>
        <taxon>Pseudomonadati</taxon>
        <taxon>Pseudomonadota</taxon>
        <taxon>Betaproteobacteria</taxon>
        <taxon>Rhodocyclales</taxon>
        <taxon>Rhodocyclaceae</taxon>
        <taxon>Aromatoleum</taxon>
    </lineage>
</organism>